<protein>
    <recommendedName>
        <fullName evidence="1">Large ribosomal subunit protein bL35</fullName>
    </recommendedName>
    <alternativeName>
        <fullName evidence="2">50S ribosomal protein L35</fullName>
    </alternativeName>
</protein>
<comment type="similarity">
    <text evidence="1">Belongs to the bacterial ribosomal protein bL35 family.</text>
</comment>
<proteinExistence type="inferred from homology"/>
<evidence type="ECO:0000255" key="1">
    <source>
        <dbReference type="HAMAP-Rule" id="MF_00514"/>
    </source>
</evidence>
<evidence type="ECO:0000305" key="2"/>
<organism>
    <name type="scientific">Hyphomonas neptunium (strain ATCC 15444)</name>
    <dbReference type="NCBI Taxonomy" id="228405"/>
    <lineage>
        <taxon>Bacteria</taxon>
        <taxon>Pseudomonadati</taxon>
        <taxon>Pseudomonadota</taxon>
        <taxon>Alphaproteobacteria</taxon>
        <taxon>Hyphomonadales</taxon>
        <taxon>Hyphomonadaceae</taxon>
        <taxon>Hyphomonas</taxon>
    </lineage>
</organism>
<keyword id="KW-1185">Reference proteome</keyword>
<keyword id="KW-0687">Ribonucleoprotein</keyword>
<keyword id="KW-0689">Ribosomal protein</keyword>
<name>RL35_HYPNA</name>
<accession>Q0C533</accession>
<reference key="1">
    <citation type="journal article" date="2006" name="J. Bacteriol.">
        <title>Comparative genomic evidence for a close relationship between the dimorphic prosthecate bacteria Hyphomonas neptunium and Caulobacter crescentus.</title>
        <authorList>
            <person name="Badger J.H."/>
            <person name="Hoover T.R."/>
            <person name="Brun Y.V."/>
            <person name="Weiner R.M."/>
            <person name="Laub M.T."/>
            <person name="Alexandre G."/>
            <person name="Mrazek J."/>
            <person name="Ren Q."/>
            <person name="Paulsen I.T."/>
            <person name="Nelson K.E."/>
            <person name="Khouri H.M."/>
            <person name="Radune D."/>
            <person name="Sosa J."/>
            <person name="Dodson R.J."/>
            <person name="Sullivan S.A."/>
            <person name="Rosovitz M.J."/>
            <person name="Madupu R."/>
            <person name="Brinkac L.M."/>
            <person name="Durkin A.S."/>
            <person name="Daugherty S.C."/>
            <person name="Kothari S.P."/>
            <person name="Giglio M.G."/>
            <person name="Zhou L."/>
            <person name="Haft D.H."/>
            <person name="Selengut J.D."/>
            <person name="Davidsen T.M."/>
            <person name="Yang Q."/>
            <person name="Zafar N."/>
            <person name="Ward N.L."/>
        </authorList>
    </citation>
    <scope>NUCLEOTIDE SEQUENCE [LARGE SCALE GENOMIC DNA]</scope>
    <source>
        <strain>ATCC 15444</strain>
    </source>
</reference>
<dbReference type="EMBL" id="CP000158">
    <property type="protein sequence ID" value="ABI76267.1"/>
    <property type="molecule type" value="Genomic_DNA"/>
</dbReference>
<dbReference type="RefSeq" id="WP_011645460.1">
    <property type="nucleotide sequence ID" value="NC_008358.1"/>
</dbReference>
<dbReference type="SMR" id="Q0C533"/>
<dbReference type="STRING" id="228405.HNE_0430"/>
<dbReference type="KEGG" id="hne:HNE_0430"/>
<dbReference type="eggNOG" id="COG0291">
    <property type="taxonomic scope" value="Bacteria"/>
</dbReference>
<dbReference type="HOGENOM" id="CLU_169643_2_1_5"/>
<dbReference type="Proteomes" id="UP000001959">
    <property type="component" value="Chromosome"/>
</dbReference>
<dbReference type="GO" id="GO:0022625">
    <property type="term" value="C:cytosolic large ribosomal subunit"/>
    <property type="evidence" value="ECO:0007669"/>
    <property type="project" value="TreeGrafter"/>
</dbReference>
<dbReference type="GO" id="GO:0003735">
    <property type="term" value="F:structural constituent of ribosome"/>
    <property type="evidence" value="ECO:0007669"/>
    <property type="project" value="InterPro"/>
</dbReference>
<dbReference type="GO" id="GO:0006412">
    <property type="term" value="P:translation"/>
    <property type="evidence" value="ECO:0007669"/>
    <property type="project" value="UniProtKB-UniRule"/>
</dbReference>
<dbReference type="FunFam" id="4.10.410.60:FF:000001">
    <property type="entry name" value="50S ribosomal protein L35"/>
    <property type="match status" value="1"/>
</dbReference>
<dbReference type="Gene3D" id="4.10.410.60">
    <property type="match status" value="1"/>
</dbReference>
<dbReference type="HAMAP" id="MF_00514">
    <property type="entry name" value="Ribosomal_bL35"/>
    <property type="match status" value="1"/>
</dbReference>
<dbReference type="InterPro" id="IPR001706">
    <property type="entry name" value="Ribosomal_bL35"/>
</dbReference>
<dbReference type="InterPro" id="IPR021137">
    <property type="entry name" value="Ribosomal_bL35-like"/>
</dbReference>
<dbReference type="InterPro" id="IPR018265">
    <property type="entry name" value="Ribosomal_bL35_CS"/>
</dbReference>
<dbReference type="InterPro" id="IPR037229">
    <property type="entry name" value="Ribosomal_bL35_sf"/>
</dbReference>
<dbReference type="NCBIfam" id="TIGR00001">
    <property type="entry name" value="rpmI_bact"/>
    <property type="match status" value="1"/>
</dbReference>
<dbReference type="PANTHER" id="PTHR33343">
    <property type="entry name" value="54S RIBOSOMAL PROTEIN BL35M"/>
    <property type="match status" value="1"/>
</dbReference>
<dbReference type="PANTHER" id="PTHR33343:SF1">
    <property type="entry name" value="LARGE RIBOSOMAL SUBUNIT PROTEIN BL35M"/>
    <property type="match status" value="1"/>
</dbReference>
<dbReference type="Pfam" id="PF01632">
    <property type="entry name" value="Ribosomal_L35p"/>
    <property type="match status" value="1"/>
</dbReference>
<dbReference type="PRINTS" id="PR00064">
    <property type="entry name" value="RIBOSOMALL35"/>
</dbReference>
<dbReference type="SUPFAM" id="SSF143034">
    <property type="entry name" value="L35p-like"/>
    <property type="match status" value="1"/>
</dbReference>
<dbReference type="PROSITE" id="PS00936">
    <property type="entry name" value="RIBOSOMAL_L35"/>
    <property type="match status" value="1"/>
</dbReference>
<gene>
    <name evidence="1" type="primary">rpmI</name>
    <name type="ordered locus">HNE_0430</name>
</gene>
<sequence length="66" mass="7395">MPKMKTKKAAAKRFKITATGKLKHGVAGKRHRLMSHNAKYIRQNRGTSVGAKADEARVKKYLPYGL</sequence>
<feature type="chain" id="PRO_1000050701" description="Large ribosomal subunit protein bL35">
    <location>
        <begin position="1"/>
        <end position="66"/>
    </location>
</feature>